<keyword id="KW-1185">Reference proteome</keyword>
<keyword id="KW-0687">Ribonucleoprotein</keyword>
<keyword id="KW-0689">Ribosomal protein</keyword>
<keyword id="KW-0694">RNA-binding</keyword>
<keyword id="KW-0699">rRNA-binding</keyword>
<gene>
    <name evidence="1" type="primary">rplN</name>
    <name type="ordered locus">Abu_0762</name>
</gene>
<comment type="function">
    <text evidence="1">Binds to 23S rRNA. Forms part of two intersubunit bridges in the 70S ribosome.</text>
</comment>
<comment type="subunit">
    <text evidence="1">Part of the 50S ribosomal subunit. Forms a cluster with proteins L3 and L19. In the 70S ribosome, L14 and L19 interact and together make contacts with the 16S rRNA in bridges B5 and B8.</text>
</comment>
<comment type="similarity">
    <text evidence="1">Belongs to the universal ribosomal protein uL14 family.</text>
</comment>
<organism>
    <name type="scientific">Aliarcobacter butzleri (strain RM4018)</name>
    <name type="common">Arcobacter butzleri</name>
    <dbReference type="NCBI Taxonomy" id="367737"/>
    <lineage>
        <taxon>Bacteria</taxon>
        <taxon>Pseudomonadati</taxon>
        <taxon>Campylobacterota</taxon>
        <taxon>Epsilonproteobacteria</taxon>
        <taxon>Campylobacterales</taxon>
        <taxon>Arcobacteraceae</taxon>
        <taxon>Aliarcobacter</taxon>
    </lineage>
</organism>
<evidence type="ECO:0000255" key="1">
    <source>
        <dbReference type="HAMAP-Rule" id="MF_01367"/>
    </source>
</evidence>
<evidence type="ECO:0000305" key="2"/>
<accession>A8ESV3</accession>
<sequence>MIQSFTRLNVADNTGAKEIMCIKVLGGSKRRYATVGDVIVASVKKALPTGKIKKGQVVKAVVVRTHKEVQRENGSLIRFDDNAAVILDAKREPVGTRIFGPVAREVRYSGFMKIVSLAPEVL</sequence>
<reference key="1">
    <citation type="journal article" date="2007" name="PLoS ONE">
        <title>The complete genome sequence and analysis of the Epsilonproteobacterium Arcobacter butzleri.</title>
        <authorList>
            <person name="Miller W.G."/>
            <person name="Parker C.T."/>
            <person name="Rubenfield M."/>
            <person name="Mendz G.L."/>
            <person name="Woesten M.M.S.M."/>
            <person name="Ussery D.W."/>
            <person name="Stolz J.F."/>
            <person name="Binnewies T.T."/>
            <person name="Hallin P.F."/>
            <person name="Wang G."/>
            <person name="Malek J.A."/>
            <person name="Rogosin A."/>
            <person name="Stanker L.H."/>
            <person name="Mandrell R.E."/>
        </authorList>
    </citation>
    <scope>NUCLEOTIDE SEQUENCE [LARGE SCALE GENOMIC DNA]</scope>
    <source>
        <strain>RM4018</strain>
    </source>
</reference>
<name>RL14_ALIB4</name>
<proteinExistence type="inferred from homology"/>
<feature type="chain" id="PRO_1000068003" description="Large ribosomal subunit protein uL14">
    <location>
        <begin position="1"/>
        <end position="122"/>
    </location>
</feature>
<protein>
    <recommendedName>
        <fullName evidence="1">Large ribosomal subunit protein uL14</fullName>
    </recommendedName>
    <alternativeName>
        <fullName evidence="2">50S ribosomal protein L14</fullName>
    </alternativeName>
</protein>
<dbReference type="EMBL" id="CP000361">
    <property type="protein sequence ID" value="ABV67027.1"/>
    <property type="molecule type" value="Genomic_DNA"/>
</dbReference>
<dbReference type="RefSeq" id="WP_004510830.1">
    <property type="nucleotide sequence ID" value="NC_009850.1"/>
</dbReference>
<dbReference type="SMR" id="A8ESV3"/>
<dbReference type="STRING" id="367737.Abu_0762"/>
<dbReference type="GeneID" id="24304198"/>
<dbReference type="KEGG" id="abu:Abu_0762"/>
<dbReference type="eggNOG" id="COG0093">
    <property type="taxonomic scope" value="Bacteria"/>
</dbReference>
<dbReference type="HOGENOM" id="CLU_095071_2_1_7"/>
<dbReference type="Proteomes" id="UP000001136">
    <property type="component" value="Chromosome"/>
</dbReference>
<dbReference type="GO" id="GO:0022625">
    <property type="term" value="C:cytosolic large ribosomal subunit"/>
    <property type="evidence" value="ECO:0007669"/>
    <property type="project" value="TreeGrafter"/>
</dbReference>
<dbReference type="GO" id="GO:0070180">
    <property type="term" value="F:large ribosomal subunit rRNA binding"/>
    <property type="evidence" value="ECO:0007669"/>
    <property type="project" value="TreeGrafter"/>
</dbReference>
<dbReference type="GO" id="GO:0003735">
    <property type="term" value="F:structural constituent of ribosome"/>
    <property type="evidence" value="ECO:0007669"/>
    <property type="project" value="InterPro"/>
</dbReference>
<dbReference type="GO" id="GO:0006412">
    <property type="term" value="P:translation"/>
    <property type="evidence" value="ECO:0007669"/>
    <property type="project" value="UniProtKB-UniRule"/>
</dbReference>
<dbReference type="CDD" id="cd00337">
    <property type="entry name" value="Ribosomal_uL14"/>
    <property type="match status" value="1"/>
</dbReference>
<dbReference type="FunFam" id="2.40.150.20:FF:000001">
    <property type="entry name" value="50S ribosomal protein L14"/>
    <property type="match status" value="1"/>
</dbReference>
<dbReference type="Gene3D" id="2.40.150.20">
    <property type="entry name" value="Ribosomal protein L14"/>
    <property type="match status" value="1"/>
</dbReference>
<dbReference type="HAMAP" id="MF_01367">
    <property type="entry name" value="Ribosomal_uL14"/>
    <property type="match status" value="1"/>
</dbReference>
<dbReference type="InterPro" id="IPR000218">
    <property type="entry name" value="Ribosomal_uL14"/>
</dbReference>
<dbReference type="InterPro" id="IPR005745">
    <property type="entry name" value="Ribosomal_uL14_bac-type"/>
</dbReference>
<dbReference type="InterPro" id="IPR019972">
    <property type="entry name" value="Ribosomal_uL14_CS"/>
</dbReference>
<dbReference type="InterPro" id="IPR036853">
    <property type="entry name" value="Ribosomal_uL14_sf"/>
</dbReference>
<dbReference type="NCBIfam" id="TIGR01067">
    <property type="entry name" value="rplN_bact"/>
    <property type="match status" value="1"/>
</dbReference>
<dbReference type="PANTHER" id="PTHR11761">
    <property type="entry name" value="50S/60S RIBOSOMAL PROTEIN L14/L23"/>
    <property type="match status" value="1"/>
</dbReference>
<dbReference type="PANTHER" id="PTHR11761:SF3">
    <property type="entry name" value="LARGE RIBOSOMAL SUBUNIT PROTEIN UL14M"/>
    <property type="match status" value="1"/>
</dbReference>
<dbReference type="Pfam" id="PF00238">
    <property type="entry name" value="Ribosomal_L14"/>
    <property type="match status" value="1"/>
</dbReference>
<dbReference type="SMART" id="SM01374">
    <property type="entry name" value="Ribosomal_L14"/>
    <property type="match status" value="1"/>
</dbReference>
<dbReference type="SUPFAM" id="SSF50193">
    <property type="entry name" value="Ribosomal protein L14"/>
    <property type="match status" value="1"/>
</dbReference>
<dbReference type="PROSITE" id="PS00049">
    <property type="entry name" value="RIBOSOMAL_L14"/>
    <property type="match status" value="1"/>
</dbReference>